<evidence type="ECO:0000255" key="1">
    <source>
        <dbReference type="HAMAP-Rule" id="MF_00470"/>
    </source>
</evidence>
<organism>
    <name type="scientific">Salmonella gallinarum (strain 287/91 / NCTC 13346)</name>
    <dbReference type="NCBI Taxonomy" id="550538"/>
    <lineage>
        <taxon>Bacteria</taxon>
        <taxon>Pseudomonadati</taxon>
        <taxon>Pseudomonadota</taxon>
        <taxon>Gammaproteobacteria</taxon>
        <taxon>Enterobacterales</taxon>
        <taxon>Enterobacteriaceae</taxon>
        <taxon>Salmonella</taxon>
    </lineage>
</organism>
<protein>
    <recommendedName>
        <fullName evidence="1">o-succinylbenzoate synthase</fullName>
        <shortName evidence="1">OSB synthase</shortName>
        <shortName evidence="1">OSBS</shortName>
        <ecNumber evidence="1">4.2.1.113</ecNumber>
    </recommendedName>
    <alternativeName>
        <fullName evidence="1">4-(2'-carboxyphenyl)-4-oxybutyric acid synthase</fullName>
    </alternativeName>
    <alternativeName>
        <fullName evidence="1">o-succinylbenzoic acid synthase</fullName>
    </alternativeName>
</protein>
<reference key="1">
    <citation type="journal article" date="2008" name="Genome Res.">
        <title>Comparative genome analysis of Salmonella enteritidis PT4 and Salmonella gallinarum 287/91 provides insights into evolutionary and host adaptation pathways.</title>
        <authorList>
            <person name="Thomson N.R."/>
            <person name="Clayton D.J."/>
            <person name="Windhorst D."/>
            <person name="Vernikos G."/>
            <person name="Davidson S."/>
            <person name="Churcher C."/>
            <person name="Quail M.A."/>
            <person name="Stevens M."/>
            <person name="Jones M.A."/>
            <person name="Watson M."/>
            <person name="Barron A."/>
            <person name="Layton A."/>
            <person name="Pickard D."/>
            <person name="Kingsley R.A."/>
            <person name="Bignell A."/>
            <person name="Clark L."/>
            <person name="Harris B."/>
            <person name="Ormond D."/>
            <person name="Abdellah Z."/>
            <person name="Brooks K."/>
            <person name="Cherevach I."/>
            <person name="Chillingworth T."/>
            <person name="Woodward J."/>
            <person name="Norberczak H."/>
            <person name="Lord A."/>
            <person name="Arrowsmith C."/>
            <person name="Jagels K."/>
            <person name="Moule S."/>
            <person name="Mungall K."/>
            <person name="Saunders M."/>
            <person name="Whitehead S."/>
            <person name="Chabalgoity J.A."/>
            <person name="Maskell D."/>
            <person name="Humphreys T."/>
            <person name="Roberts M."/>
            <person name="Barrow P.A."/>
            <person name="Dougan G."/>
            <person name="Parkhill J."/>
        </authorList>
    </citation>
    <scope>NUCLEOTIDE SEQUENCE [LARGE SCALE GENOMIC DNA]</scope>
    <source>
        <strain>287/91 / NCTC 13346</strain>
    </source>
</reference>
<sequence>MRSAQVYRWQIPMDAGVVLRDRRLKTRDGLYVCLRDGEREGWGEISPLPGFSQETWEEAQTALLTWVNDWLQGSEGLPEMPSVAFGASCALAELTGVLPEAADYRAAPLCTGDPDDLVLRLADMPGEKIAKVKVGLYEAVRDGMVVNLLLEAIPDLHLRLDANRAWTPLKAQQFAKYVNPDYRARIAFLEEPCKTRDDSRAFARETGIAIAWDESLREADFTFEAEEGVRAVVIKPTLTGSLDKVREQVAAAHALGLTAVISSSIESSLGLTQLARIAAWLTPGTLPGLDTLHLMQAQQVRPWPGSALPCLKRDELERLL</sequence>
<comment type="function">
    <text evidence="1">Converts 2-succinyl-6-hydroxy-2,4-cyclohexadiene-1-carboxylate (SHCHC) to 2-succinylbenzoate (OSB).</text>
</comment>
<comment type="catalytic activity">
    <reaction evidence="1">
        <text>(1R,6R)-6-hydroxy-2-succinyl-cyclohexa-2,4-diene-1-carboxylate = 2-succinylbenzoate + H2O</text>
        <dbReference type="Rhea" id="RHEA:10196"/>
        <dbReference type="ChEBI" id="CHEBI:15377"/>
        <dbReference type="ChEBI" id="CHEBI:18325"/>
        <dbReference type="ChEBI" id="CHEBI:58689"/>
        <dbReference type="EC" id="4.2.1.113"/>
    </reaction>
</comment>
<comment type="cofactor">
    <cofactor evidence="1">
        <name>a divalent metal cation</name>
        <dbReference type="ChEBI" id="CHEBI:60240"/>
    </cofactor>
</comment>
<comment type="pathway">
    <text evidence="1">Quinol/quinone metabolism; 1,4-dihydroxy-2-naphthoate biosynthesis; 1,4-dihydroxy-2-naphthoate from chorismate: step 4/7.</text>
</comment>
<comment type="pathway">
    <text evidence="1">Quinol/quinone metabolism; menaquinone biosynthesis.</text>
</comment>
<comment type="similarity">
    <text evidence="1">Belongs to the mandelate racemase/muconate lactonizing enzyme family. MenC type 1 subfamily.</text>
</comment>
<name>MENC_SALG2</name>
<dbReference type="EC" id="4.2.1.113" evidence="1"/>
<dbReference type="EMBL" id="AM933173">
    <property type="protein sequence ID" value="CAR38165.1"/>
    <property type="molecule type" value="Genomic_DNA"/>
</dbReference>
<dbReference type="RefSeq" id="WP_001255563.1">
    <property type="nucleotide sequence ID" value="NC_011274.1"/>
</dbReference>
<dbReference type="SMR" id="B5RCD1"/>
<dbReference type="KEGG" id="seg:SG2335"/>
<dbReference type="HOGENOM" id="CLU_030273_0_1_6"/>
<dbReference type="UniPathway" id="UPA00079"/>
<dbReference type="UniPathway" id="UPA01057">
    <property type="reaction ID" value="UER00165"/>
</dbReference>
<dbReference type="Proteomes" id="UP000008321">
    <property type="component" value="Chromosome"/>
</dbReference>
<dbReference type="GO" id="GO:0000287">
    <property type="term" value="F:magnesium ion binding"/>
    <property type="evidence" value="ECO:0007669"/>
    <property type="project" value="UniProtKB-UniRule"/>
</dbReference>
<dbReference type="GO" id="GO:0043748">
    <property type="term" value="F:O-succinylbenzoate synthase activity"/>
    <property type="evidence" value="ECO:0007669"/>
    <property type="project" value="UniProtKB-EC"/>
</dbReference>
<dbReference type="GO" id="GO:0009234">
    <property type="term" value="P:menaquinone biosynthetic process"/>
    <property type="evidence" value="ECO:0007669"/>
    <property type="project" value="UniProtKB-UniRule"/>
</dbReference>
<dbReference type="CDD" id="cd03320">
    <property type="entry name" value="OSBS"/>
    <property type="match status" value="1"/>
</dbReference>
<dbReference type="FunFam" id="3.20.20.120:FF:000006">
    <property type="entry name" value="o-succinylbenzoate synthase"/>
    <property type="match status" value="1"/>
</dbReference>
<dbReference type="Gene3D" id="3.20.20.120">
    <property type="entry name" value="Enolase-like C-terminal domain"/>
    <property type="match status" value="1"/>
</dbReference>
<dbReference type="Gene3D" id="3.30.390.10">
    <property type="entry name" value="Enolase-like, N-terminal domain"/>
    <property type="match status" value="1"/>
</dbReference>
<dbReference type="HAMAP" id="MF_00470">
    <property type="entry name" value="MenC_1"/>
    <property type="match status" value="1"/>
</dbReference>
<dbReference type="InterPro" id="IPR036849">
    <property type="entry name" value="Enolase-like_C_sf"/>
</dbReference>
<dbReference type="InterPro" id="IPR029017">
    <property type="entry name" value="Enolase-like_N"/>
</dbReference>
<dbReference type="InterPro" id="IPR029065">
    <property type="entry name" value="Enolase_C-like"/>
</dbReference>
<dbReference type="InterPro" id="IPR013342">
    <property type="entry name" value="Mandelate_racemase_C"/>
</dbReference>
<dbReference type="InterPro" id="IPR010196">
    <property type="entry name" value="OSB_synthase_MenC1"/>
</dbReference>
<dbReference type="InterPro" id="IPR041338">
    <property type="entry name" value="OSBS_N"/>
</dbReference>
<dbReference type="NCBIfam" id="TIGR01927">
    <property type="entry name" value="menC_gam_Gplu"/>
    <property type="match status" value="1"/>
</dbReference>
<dbReference type="NCBIfam" id="NF003473">
    <property type="entry name" value="PRK05105.1"/>
    <property type="match status" value="1"/>
</dbReference>
<dbReference type="PANTHER" id="PTHR48073:SF2">
    <property type="entry name" value="O-SUCCINYLBENZOATE SYNTHASE"/>
    <property type="match status" value="1"/>
</dbReference>
<dbReference type="PANTHER" id="PTHR48073">
    <property type="entry name" value="O-SUCCINYLBENZOATE SYNTHASE-RELATED"/>
    <property type="match status" value="1"/>
</dbReference>
<dbReference type="Pfam" id="PF21508">
    <property type="entry name" value="MenC_N"/>
    <property type="match status" value="1"/>
</dbReference>
<dbReference type="Pfam" id="PF13378">
    <property type="entry name" value="MR_MLE_C"/>
    <property type="match status" value="1"/>
</dbReference>
<dbReference type="SFLD" id="SFLDS00001">
    <property type="entry name" value="Enolase"/>
    <property type="match status" value="1"/>
</dbReference>
<dbReference type="SFLD" id="SFLDF00009">
    <property type="entry name" value="o-succinylbenzoate_synthase"/>
    <property type="match status" value="1"/>
</dbReference>
<dbReference type="SMART" id="SM00922">
    <property type="entry name" value="MR_MLE"/>
    <property type="match status" value="1"/>
</dbReference>
<dbReference type="SUPFAM" id="SSF51604">
    <property type="entry name" value="Enolase C-terminal domain-like"/>
    <property type="match status" value="1"/>
</dbReference>
<dbReference type="SUPFAM" id="SSF54826">
    <property type="entry name" value="Enolase N-terminal domain-like"/>
    <property type="match status" value="1"/>
</dbReference>
<accession>B5RCD1</accession>
<proteinExistence type="inferred from homology"/>
<gene>
    <name evidence="1" type="primary">menC</name>
    <name type="ordered locus">SG2335</name>
</gene>
<feature type="chain" id="PRO_1000125581" description="o-succinylbenzoate synthase">
    <location>
        <begin position="1"/>
        <end position="320"/>
    </location>
</feature>
<feature type="active site" description="Proton donor" evidence="1">
    <location>
        <position position="133"/>
    </location>
</feature>
<feature type="active site" description="Proton acceptor" evidence="1">
    <location>
        <position position="235"/>
    </location>
</feature>
<feature type="binding site" evidence="1">
    <location>
        <position position="161"/>
    </location>
    <ligand>
        <name>Mg(2+)</name>
        <dbReference type="ChEBI" id="CHEBI:18420"/>
    </ligand>
</feature>
<feature type="binding site" evidence="1">
    <location>
        <position position="190"/>
    </location>
    <ligand>
        <name>Mg(2+)</name>
        <dbReference type="ChEBI" id="CHEBI:18420"/>
    </ligand>
</feature>
<feature type="binding site" evidence="1">
    <location>
        <position position="213"/>
    </location>
    <ligand>
        <name>Mg(2+)</name>
        <dbReference type="ChEBI" id="CHEBI:18420"/>
    </ligand>
</feature>
<keyword id="KW-0456">Lyase</keyword>
<keyword id="KW-0460">Magnesium</keyword>
<keyword id="KW-0474">Menaquinone biosynthesis</keyword>
<keyword id="KW-0479">Metal-binding</keyword>